<gene>
    <name evidence="1" type="primary">glcB</name>
    <name type="ordered locus">MAB_2409c</name>
</gene>
<keyword id="KW-0963">Cytoplasm</keyword>
<keyword id="KW-0329">Glyoxylate bypass</keyword>
<keyword id="KW-0460">Magnesium</keyword>
<keyword id="KW-0479">Metal-binding</keyword>
<keyword id="KW-0558">Oxidation</keyword>
<keyword id="KW-1185">Reference proteome</keyword>
<keyword id="KW-0808">Transferase</keyword>
<keyword id="KW-0816">Tricarboxylic acid cycle</keyword>
<feature type="chain" id="PRO_1000130892" description="Malate synthase G">
    <location>
        <begin position="1"/>
        <end position="735"/>
    </location>
</feature>
<feature type="active site" description="Proton acceptor" evidence="1">
    <location>
        <position position="346"/>
    </location>
</feature>
<feature type="active site" description="Proton donor" evidence="1">
    <location>
        <position position="641"/>
    </location>
</feature>
<feature type="binding site" evidence="1">
    <location>
        <position position="118"/>
    </location>
    <ligand>
        <name>acetyl-CoA</name>
        <dbReference type="ChEBI" id="CHEBI:57288"/>
    </ligand>
</feature>
<feature type="binding site" evidence="1">
    <location>
        <begin position="125"/>
        <end position="126"/>
    </location>
    <ligand>
        <name>acetyl-CoA</name>
        <dbReference type="ChEBI" id="CHEBI:57288"/>
    </ligand>
</feature>
<feature type="binding site" evidence="1">
    <location>
        <position position="281"/>
    </location>
    <ligand>
        <name>acetyl-CoA</name>
        <dbReference type="ChEBI" id="CHEBI:57288"/>
    </ligand>
</feature>
<feature type="binding site" evidence="1">
    <location>
        <position position="318"/>
    </location>
    <ligand>
        <name>acetyl-CoA</name>
        <dbReference type="ChEBI" id="CHEBI:57288"/>
    </ligand>
</feature>
<feature type="binding site" evidence="1">
    <location>
        <position position="346"/>
    </location>
    <ligand>
        <name>glyoxylate</name>
        <dbReference type="ChEBI" id="CHEBI:36655"/>
    </ligand>
</feature>
<feature type="binding site" evidence="1">
    <location>
        <position position="441"/>
    </location>
    <ligand>
        <name>glyoxylate</name>
        <dbReference type="ChEBI" id="CHEBI:36655"/>
    </ligand>
</feature>
<feature type="binding site" evidence="1">
    <location>
        <position position="441"/>
    </location>
    <ligand>
        <name>Mg(2+)</name>
        <dbReference type="ChEBI" id="CHEBI:18420"/>
    </ligand>
</feature>
<feature type="binding site" evidence="1">
    <location>
        <begin position="466"/>
        <end position="469"/>
    </location>
    <ligand>
        <name>glyoxylate</name>
        <dbReference type="ChEBI" id="CHEBI:36655"/>
    </ligand>
</feature>
<feature type="binding site" evidence="1">
    <location>
        <position position="469"/>
    </location>
    <ligand>
        <name>Mg(2+)</name>
        <dbReference type="ChEBI" id="CHEBI:18420"/>
    </ligand>
</feature>
<feature type="binding site" evidence="1">
    <location>
        <position position="550"/>
    </location>
    <ligand>
        <name>acetyl-CoA</name>
        <dbReference type="ChEBI" id="CHEBI:57288"/>
    </ligand>
</feature>
<feature type="modified residue" description="Cysteine sulfenic acid (-SOH)" evidence="1">
    <location>
        <position position="627"/>
    </location>
</feature>
<organism>
    <name type="scientific">Mycobacteroides abscessus (strain ATCC 19977 / DSM 44196 / CCUG 20993 / CIP 104536 / JCM 13569 / NCTC 13031 / TMC 1543 / L948)</name>
    <name type="common">Mycobacterium abscessus</name>
    <dbReference type="NCBI Taxonomy" id="561007"/>
    <lineage>
        <taxon>Bacteria</taxon>
        <taxon>Bacillati</taxon>
        <taxon>Actinomycetota</taxon>
        <taxon>Actinomycetes</taxon>
        <taxon>Mycobacteriales</taxon>
        <taxon>Mycobacteriaceae</taxon>
        <taxon>Mycobacteroides</taxon>
        <taxon>Mycobacteroides abscessus</taxon>
    </lineage>
</organism>
<reference key="1">
    <citation type="journal article" date="2009" name="PLoS ONE">
        <title>Non mycobacterial virulence genes in the genome of the emerging pathogen Mycobacterium abscessus.</title>
        <authorList>
            <person name="Ripoll F."/>
            <person name="Pasek S."/>
            <person name="Schenowitz C."/>
            <person name="Dossat C."/>
            <person name="Barbe V."/>
            <person name="Rottman M."/>
            <person name="Macheras E."/>
            <person name="Heym B."/>
            <person name="Herrmann J.L."/>
            <person name="Daffe M."/>
            <person name="Brosch R."/>
            <person name="Risler J.L."/>
            <person name="Gaillard J.L."/>
        </authorList>
    </citation>
    <scope>NUCLEOTIDE SEQUENCE [LARGE SCALE GENOMIC DNA]</scope>
    <source>
        <strain>ATCC 19977 / DSM 44196 / CCUG 20993 / CIP 104536 / JCM 13569 / NCTC 13031 / TMC 1543 / L948</strain>
    </source>
</reference>
<comment type="function">
    <text evidence="1">Involved in the glycolate utilization. Catalyzes the condensation and subsequent hydrolysis of acetyl-coenzyme A (acetyl-CoA) and glyoxylate to form malate and CoA.</text>
</comment>
<comment type="catalytic activity">
    <reaction evidence="1">
        <text>glyoxylate + acetyl-CoA + H2O = (S)-malate + CoA + H(+)</text>
        <dbReference type="Rhea" id="RHEA:18181"/>
        <dbReference type="ChEBI" id="CHEBI:15377"/>
        <dbReference type="ChEBI" id="CHEBI:15378"/>
        <dbReference type="ChEBI" id="CHEBI:15589"/>
        <dbReference type="ChEBI" id="CHEBI:36655"/>
        <dbReference type="ChEBI" id="CHEBI:57287"/>
        <dbReference type="ChEBI" id="CHEBI:57288"/>
        <dbReference type="EC" id="2.3.3.9"/>
    </reaction>
</comment>
<comment type="cofactor">
    <cofactor evidence="1">
        <name>Mg(2+)</name>
        <dbReference type="ChEBI" id="CHEBI:18420"/>
    </cofactor>
</comment>
<comment type="pathway">
    <text evidence="1">Carbohydrate metabolism; glyoxylate cycle; (S)-malate from isocitrate: step 2/2.</text>
</comment>
<comment type="subunit">
    <text evidence="1">Monomer.</text>
</comment>
<comment type="subcellular location">
    <subcellularLocation>
        <location evidence="1">Cytoplasm</location>
    </subcellularLocation>
</comment>
<comment type="similarity">
    <text evidence="1">Belongs to the malate synthase family. GlcB subfamily.</text>
</comment>
<accession>B1MB69</accession>
<dbReference type="EC" id="2.3.3.9" evidence="1"/>
<dbReference type="EMBL" id="CU458896">
    <property type="protein sequence ID" value="CAM62490.1"/>
    <property type="molecule type" value="Genomic_DNA"/>
</dbReference>
<dbReference type="RefSeq" id="WP_005075497.1">
    <property type="nucleotide sequence ID" value="NZ_MLCG01000006.1"/>
</dbReference>
<dbReference type="SMR" id="B1MB69"/>
<dbReference type="GeneID" id="93379348"/>
<dbReference type="KEGG" id="mab:MAB_2409c"/>
<dbReference type="UniPathway" id="UPA00703">
    <property type="reaction ID" value="UER00720"/>
</dbReference>
<dbReference type="Proteomes" id="UP000007137">
    <property type="component" value="Chromosome"/>
</dbReference>
<dbReference type="GO" id="GO:0005829">
    <property type="term" value="C:cytosol"/>
    <property type="evidence" value="ECO:0007669"/>
    <property type="project" value="TreeGrafter"/>
</dbReference>
<dbReference type="GO" id="GO:0000287">
    <property type="term" value="F:magnesium ion binding"/>
    <property type="evidence" value="ECO:0007669"/>
    <property type="project" value="TreeGrafter"/>
</dbReference>
<dbReference type="GO" id="GO:0004474">
    <property type="term" value="F:malate synthase activity"/>
    <property type="evidence" value="ECO:0007669"/>
    <property type="project" value="UniProtKB-UniRule"/>
</dbReference>
<dbReference type="GO" id="GO:0009436">
    <property type="term" value="P:glyoxylate catabolic process"/>
    <property type="evidence" value="ECO:0007669"/>
    <property type="project" value="TreeGrafter"/>
</dbReference>
<dbReference type="GO" id="GO:0006097">
    <property type="term" value="P:glyoxylate cycle"/>
    <property type="evidence" value="ECO:0007669"/>
    <property type="project" value="UniProtKB-UniRule"/>
</dbReference>
<dbReference type="GO" id="GO:0006099">
    <property type="term" value="P:tricarboxylic acid cycle"/>
    <property type="evidence" value="ECO:0007669"/>
    <property type="project" value="UniProtKB-KW"/>
</dbReference>
<dbReference type="CDD" id="cd00728">
    <property type="entry name" value="malate_synt_G"/>
    <property type="match status" value="1"/>
</dbReference>
<dbReference type="FunFam" id="3.20.20.360:FF:000002">
    <property type="entry name" value="Malate synthase G"/>
    <property type="match status" value="1"/>
</dbReference>
<dbReference type="Gene3D" id="3.20.20.360">
    <property type="entry name" value="Malate synthase, domain 3"/>
    <property type="match status" value="2"/>
</dbReference>
<dbReference type="Gene3D" id="1.20.1220.12">
    <property type="entry name" value="Malate synthase, domain III"/>
    <property type="match status" value="1"/>
</dbReference>
<dbReference type="HAMAP" id="MF_00641">
    <property type="entry name" value="Malate_synth_G"/>
    <property type="match status" value="1"/>
</dbReference>
<dbReference type="InterPro" id="IPR044856">
    <property type="entry name" value="Malate_synth_C_sf"/>
</dbReference>
<dbReference type="InterPro" id="IPR011076">
    <property type="entry name" value="Malate_synth_sf"/>
</dbReference>
<dbReference type="InterPro" id="IPR001465">
    <property type="entry name" value="Malate_synthase_TIM"/>
</dbReference>
<dbReference type="InterPro" id="IPR006253">
    <property type="entry name" value="Malate_synthG"/>
</dbReference>
<dbReference type="InterPro" id="IPR048355">
    <property type="entry name" value="MS_C"/>
</dbReference>
<dbReference type="InterPro" id="IPR048356">
    <property type="entry name" value="MS_N"/>
</dbReference>
<dbReference type="InterPro" id="IPR046363">
    <property type="entry name" value="MS_N_TIM-barrel_dom"/>
</dbReference>
<dbReference type="InterPro" id="IPR048357">
    <property type="entry name" value="MSG_insertion"/>
</dbReference>
<dbReference type="NCBIfam" id="TIGR01345">
    <property type="entry name" value="malate_syn_G"/>
    <property type="match status" value="1"/>
</dbReference>
<dbReference type="NCBIfam" id="NF002825">
    <property type="entry name" value="PRK02999.1"/>
    <property type="match status" value="1"/>
</dbReference>
<dbReference type="PANTHER" id="PTHR42739">
    <property type="entry name" value="MALATE SYNTHASE G"/>
    <property type="match status" value="1"/>
</dbReference>
<dbReference type="PANTHER" id="PTHR42739:SF1">
    <property type="entry name" value="MALATE SYNTHASE G"/>
    <property type="match status" value="1"/>
</dbReference>
<dbReference type="Pfam" id="PF20659">
    <property type="entry name" value="MS_C"/>
    <property type="match status" value="1"/>
</dbReference>
<dbReference type="Pfam" id="PF20656">
    <property type="entry name" value="MS_N"/>
    <property type="match status" value="1"/>
</dbReference>
<dbReference type="Pfam" id="PF01274">
    <property type="entry name" value="MS_TIM-barrel"/>
    <property type="match status" value="1"/>
</dbReference>
<dbReference type="Pfam" id="PF20658">
    <property type="entry name" value="MSG_insertion"/>
    <property type="match status" value="1"/>
</dbReference>
<dbReference type="SUPFAM" id="SSF51645">
    <property type="entry name" value="Malate synthase G"/>
    <property type="match status" value="1"/>
</dbReference>
<evidence type="ECO:0000255" key="1">
    <source>
        <dbReference type="HAMAP-Rule" id="MF_00641"/>
    </source>
</evidence>
<sequence>MSDRVDVGNLRVARVLYDFITNEALPGTGVDADAFWAGVDKVVTDLAPRNRELLERRDDLQTQVDRWHRQRAIEPLDGAAYQDFLTEIGYLVPEPEDFTITTANVDDEITTTAGPQLVVPILNARFALNAANARWGSLYDALYGTDVIPEADGAEKASADTGGYNKVRGDKVIAYAREVLDGAAPLASGSWKDAVGLKIDDGQLLVELGDEFSTGLQNPDQFVGYTGKLGKPQWSVLLINHGLHIEVLIDPDSPIGSTDKAGIKDVVLESAITTIMDFEDSVAAVDAEDKVLGYRNWLGLNKGDLSEEVSKGGKTFTRVLNEDRVFTTPDGKGELTLPGRSLLFVRNVGHLMTNDAIVDAAGNEMPEGIQDALFTSLIAIHGLRSGKKNGPLKNSRTGSIYIVKPKMHGPEEVAFTAELFGRVEEVLGLPHATLKVGIMDEERRTTVNLKAAIKAASDRVVFINTGFLDRTGDEIHTSMEAGPMCRKAVMKSQPWILAYEDHNVDTGLGAGLAGKAQIGKGMWAMPDLMADMVAQKIAQPRAGATTAWVPSPTAATLHALHYHQVDVKAVDQELAGKHRAKLESLLTIPLAESRHDWTAEDIREEIDNNCQSILGYVVRWIDQGVGCSKVPDIHDVALMEDRATLRISSQLLANWLRHDVITEDEVVEGLKRMAPVVDRQNAGDKEYRPMAPDFDSNIAFQAAKELILEGKDQPNGYTEPILHRRRREYKAAAAK</sequence>
<proteinExistence type="inferred from homology"/>
<name>MASZ_MYCA9</name>
<protein>
    <recommendedName>
        <fullName evidence="1">Malate synthase G</fullName>
        <ecNumber evidence="1">2.3.3.9</ecNumber>
    </recommendedName>
</protein>